<accession>B2RLG7</accession>
<dbReference type="EC" id="2.7.9.3" evidence="1"/>
<dbReference type="EMBL" id="AP009380">
    <property type="protein sequence ID" value="BAG34212.1"/>
    <property type="molecule type" value="Genomic_DNA"/>
</dbReference>
<dbReference type="RefSeq" id="WP_012458463.1">
    <property type="nucleotide sequence ID" value="NC_010729.1"/>
</dbReference>
<dbReference type="SMR" id="B2RLG7"/>
<dbReference type="DNASU" id="6330824"/>
<dbReference type="GeneID" id="29256858"/>
<dbReference type="KEGG" id="pgn:PGN_1693"/>
<dbReference type="eggNOG" id="COG0709">
    <property type="taxonomic scope" value="Bacteria"/>
</dbReference>
<dbReference type="HOGENOM" id="CLU_032859_0_1_10"/>
<dbReference type="OrthoDB" id="9772934at2"/>
<dbReference type="BioCyc" id="PGIN431947:G1G2V-1901-MONOMER"/>
<dbReference type="Proteomes" id="UP000008842">
    <property type="component" value="Chromosome"/>
</dbReference>
<dbReference type="GO" id="GO:0005737">
    <property type="term" value="C:cytoplasm"/>
    <property type="evidence" value="ECO:0007669"/>
    <property type="project" value="TreeGrafter"/>
</dbReference>
<dbReference type="GO" id="GO:0005524">
    <property type="term" value="F:ATP binding"/>
    <property type="evidence" value="ECO:0007669"/>
    <property type="project" value="UniProtKB-UniRule"/>
</dbReference>
<dbReference type="GO" id="GO:0000287">
    <property type="term" value="F:magnesium ion binding"/>
    <property type="evidence" value="ECO:0007669"/>
    <property type="project" value="UniProtKB-UniRule"/>
</dbReference>
<dbReference type="GO" id="GO:0004756">
    <property type="term" value="F:selenide, water dikinase activity"/>
    <property type="evidence" value="ECO:0007669"/>
    <property type="project" value="UniProtKB-UniRule"/>
</dbReference>
<dbReference type="GO" id="GO:0016260">
    <property type="term" value="P:selenocysteine biosynthetic process"/>
    <property type="evidence" value="ECO:0007669"/>
    <property type="project" value="InterPro"/>
</dbReference>
<dbReference type="CDD" id="cd02195">
    <property type="entry name" value="SelD"/>
    <property type="match status" value="1"/>
</dbReference>
<dbReference type="FunFam" id="3.30.1330.10:FF:000003">
    <property type="entry name" value="Selenide, water dikinase"/>
    <property type="match status" value="1"/>
</dbReference>
<dbReference type="Gene3D" id="3.90.650.10">
    <property type="entry name" value="PurM-like C-terminal domain"/>
    <property type="match status" value="1"/>
</dbReference>
<dbReference type="Gene3D" id="3.30.1330.10">
    <property type="entry name" value="PurM-like, N-terminal domain"/>
    <property type="match status" value="1"/>
</dbReference>
<dbReference type="HAMAP" id="MF_00625">
    <property type="entry name" value="SelD"/>
    <property type="match status" value="1"/>
</dbReference>
<dbReference type="InterPro" id="IPR010918">
    <property type="entry name" value="PurM-like_C_dom"/>
</dbReference>
<dbReference type="InterPro" id="IPR036676">
    <property type="entry name" value="PurM-like_C_sf"/>
</dbReference>
<dbReference type="InterPro" id="IPR016188">
    <property type="entry name" value="PurM-like_N"/>
</dbReference>
<dbReference type="InterPro" id="IPR036921">
    <property type="entry name" value="PurM-like_N_sf"/>
</dbReference>
<dbReference type="InterPro" id="IPR023061">
    <property type="entry name" value="SelD_I"/>
</dbReference>
<dbReference type="InterPro" id="IPR004536">
    <property type="entry name" value="SPS/SelD"/>
</dbReference>
<dbReference type="NCBIfam" id="NF002098">
    <property type="entry name" value="PRK00943.1"/>
    <property type="match status" value="1"/>
</dbReference>
<dbReference type="NCBIfam" id="TIGR00476">
    <property type="entry name" value="selD"/>
    <property type="match status" value="1"/>
</dbReference>
<dbReference type="PANTHER" id="PTHR10256:SF0">
    <property type="entry name" value="INACTIVE SELENIDE, WATER DIKINASE-LIKE PROTEIN-RELATED"/>
    <property type="match status" value="1"/>
</dbReference>
<dbReference type="PANTHER" id="PTHR10256">
    <property type="entry name" value="SELENIDE, WATER DIKINASE"/>
    <property type="match status" value="1"/>
</dbReference>
<dbReference type="Pfam" id="PF00586">
    <property type="entry name" value="AIRS"/>
    <property type="match status" value="1"/>
</dbReference>
<dbReference type="Pfam" id="PF02769">
    <property type="entry name" value="AIRS_C"/>
    <property type="match status" value="1"/>
</dbReference>
<dbReference type="PIRSF" id="PIRSF036407">
    <property type="entry name" value="Selenphspht_syn"/>
    <property type="match status" value="1"/>
</dbReference>
<dbReference type="SUPFAM" id="SSF56042">
    <property type="entry name" value="PurM C-terminal domain-like"/>
    <property type="match status" value="1"/>
</dbReference>
<dbReference type="SUPFAM" id="SSF55326">
    <property type="entry name" value="PurM N-terminal domain-like"/>
    <property type="match status" value="1"/>
</dbReference>
<proteinExistence type="inferred from homology"/>
<name>SELD_PORG3</name>
<keyword id="KW-0067">ATP-binding</keyword>
<keyword id="KW-0418">Kinase</keyword>
<keyword id="KW-0460">Magnesium</keyword>
<keyword id="KW-0479">Metal-binding</keyword>
<keyword id="KW-0547">Nucleotide-binding</keyword>
<keyword id="KW-0711">Selenium</keyword>
<keyword id="KW-0808">Transferase</keyword>
<feature type="chain" id="PRO_1000130521" description="Selenide, water dikinase">
    <location>
        <begin position="1"/>
        <end position="348"/>
    </location>
</feature>
<feature type="active site" evidence="1">
    <location>
        <position position="17"/>
    </location>
</feature>
<feature type="binding site" description="in other chain" evidence="1">
    <location>
        <position position="20"/>
    </location>
    <ligand>
        <name>ATP</name>
        <dbReference type="ChEBI" id="CHEBI:30616"/>
        <note>ligand shared between dimeric partners</note>
    </ligand>
</feature>
<feature type="binding site" description="in other chain" evidence="1">
    <location>
        <begin position="47"/>
        <end position="49"/>
    </location>
    <ligand>
        <name>ATP</name>
        <dbReference type="ChEBI" id="CHEBI:30616"/>
        <note>ligand shared between dimeric partners</note>
    </ligand>
</feature>
<feature type="binding site" evidence="1">
    <location>
        <position position="50"/>
    </location>
    <ligand>
        <name>Mg(2+)</name>
        <dbReference type="ChEBI" id="CHEBI:18420"/>
    </ligand>
</feature>
<feature type="binding site" description="in other chain" evidence="1">
    <location>
        <position position="67"/>
    </location>
    <ligand>
        <name>ATP</name>
        <dbReference type="ChEBI" id="CHEBI:30616"/>
        <note>ligand shared between dimeric partners</note>
    </ligand>
</feature>
<feature type="binding site" description="in other chain" evidence="1">
    <location>
        <position position="90"/>
    </location>
    <ligand>
        <name>ATP</name>
        <dbReference type="ChEBI" id="CHEBI:30616"/>
        <note>ligand shared between dimeric partners</note>
    </ligand>
</feature>
<feature type="binding site" evidence="1">
    <location>
        <position position="90"/>
    </location>
    <ligand>
        <name>Mg(2+)</name>
        <dbReference type="ChEBI" id="CHEBI:18420"/>
    </ligand>
</feature>
<feature type="binding site" evidence="1">
    <location>
        <begin position="138"/>
        <end position="140"/>
    </location>
    <ligand>
        <name>ATP</name>
        <dbReference type="ChEBI" id="CHEBI:30616"/>
        <note>ligand shared between dimeric partners</note>
    </ligand>
</feature>
<feature type="binding site" evidence="1">
    <location>
        <position position="226"/>
    </location>
    <ligand>
        <name>Mg(2+)</name>
        <dbReference type="ChEBI" id="CHEBI:18420"/>
    </ligand>
</feature>
<feature type="site" description="Important for catalytic activity" evidence="1">
    <location>
        <position position="20"/>
    </location>
</feature>
<protein>
    <recommendedName>
        <fullName evidence="1">Selenide, water dikinase</fullName>
        <ecNumber evidence="1">2.7.9.3</ecNumber>
    </recommendedName>
    <alternativeName>
        <fullName evidence="1">Selenium donor protein</fullName>
    </alternativeName>
    <alternativeName>
        <fullName evidence="1">Selenophosphate synthase</fullName>
    </alternativeName>
</protein>
<sequence length="348" mass="36904">MNRSSFDLLSTVEYGGCSAKLDPAKLSELLHDIPLPVDSRIMVDVSTHDDAGVYRLNDDTALIVTTDFFPPVCSDPYTFGRIAAANALSDVYAMGGRPLLVLNLTMFPSEGIPVEVLADILRGGQQTIDESGAFTMGGHTIDDPIPKYGLAVTGIVHPEHLVTNAGVRAGQCLVLTKPLGIGVAMAAHRLGLIGSEVYEAAIGQMCLLNRAGAELMQKYGIRGATDITGFGLLGHAKELAEASDVCLHIDSRSVPVLPECLSLLRDGCIPGATFRNLRFVGDMLRADCPTEYKMLLADAQTSGGLLMAVDADRAEDLVADLHRTGLHPFAAIIGYATDAEDAAKLIVT</sequence>
<comment type="function">
    <text evidence="1">Synthesizes selenophosphate from selenide and ATP.</text>
</comment>
<comment type="catalytic activity">
    <reaction evidence="1">
        <text>hydrogenselenide + ATP + H2O = selenophosphate + AMP + phosphate + 2 H(+)</text>
        <dbReference type="Rhea" id="RHEA:18737"/>
        <dbReference type="ChEBI" id="CHEBI:15377"/>
        <dbReference type="ChEBI" id="CHEBI:15378"/>
        <dbReference type="ChEBI" id="CHEBI:16144"/>
        <dbReference type="ChEBI" id="CHEBI:29317"/>
        <dbReference type="ChEBI" id="CHEBI:30616"/>
        <dbReference type="ChEBI" id="CHEBI:43474"/>
        <dbReference type="ChEBI" id="CHEBI:456215"/>
        <dbReference type="EC" id="2.7.9.3"/>
    </reaction>
</comment>
<comment type="cofactor">
    <cofactor evidence="1">
        <name>Mg(2+)</name>
        <dbReference type="ChEBI" id="CHEBI:18420"/>
    </cofactor>
    <text evidence="1">Binds 1 Mg(2+) ion per monomer.</text>
</comment>
<comment type="subunit">
    <text evidence="1">Homodimer.</text>
</comment>
<comment type="similarity">
    <text evidence="1">Belongs to the selenophosphate synthase 1 family. Class I subfamily.</text>
</comment>
<evidence type="ECO:0000255" key="1">
    <source>
        <dbReference type="HAMAP-Rule" id="MF_00625"/>
    </source>
</evidence>
<reference key="1">
    <citation type="journal article" date="2008" name="DNA Res.">
        <title>Determination of the genome sequence of Porphyromonas gingivalis strain ATCC 33277 and genomic comparison with strain W83 revealed extensive genome rearrangements in P. gingivalis.</title>
        <authorList>
            <person name="Naito M."/>
            <person name="Hirakawa H."/>
            <person name="Yamashita A."/>
            <person name="Ohara N."/>
            <person name="Shoji M."/>
            <person name="Yukitake H."/>
            <person name="Nakayama K."/>
            <person name="Toh H."/>
            <person name="Yoshimura F."/>
            <person name="Kuhara S."/>
            <person name="Hattori M."/>
            <person name="Hayashi T."/>
            <person name="Nakayama K."/>
        </authorList>
    </citation>
    <scope>NUCLEOTIDE SEQUENCE [LARGE SCALE GENOMIC DNA]</scope>
    <source>
        <strain>ATCC 33277 / DSM 20709 / CIP 103683 / JCM 12257 / NCTC 11834 / 2561</strain>
    </source>
</reference>
<gene>
    <name evidence="1" type="primary">selD</name>
    <name type="ordered locus">PGN_1693</name>
</gene>
<organism>
    <name type="scientific">Porphyromonas gingivalis (strain ATCC 33277 / DSM 20709 / CIP 103683 / JCM 12257 / NCTC 11834 / 2561)</name>
    <dbReference type="NCBI Taxonomy" id="431947"/>
    <lineage>
        <taxon>Bacteria</taxon>
        <taxon>Pseudomonadati</taxon>
        <taxon>Bacteroidota</taxon>
        <taxon>Bacteroidia</taxon>
        <taxon>Bacteroidales</taxon>
        <taxon>Porphyromonadaceae</taxon>
        <taxon>Porphyromonas</taxon>
    </lineage>
</organism>